<accession>P00573</accession>
<accession>Q38543</accession>
<gene>
    <name type="ordered locus">1</name>
</gene>
<dbReference type="EC" id="2.7.7.6" evidence="10"/>
<dbReference type="EMBL" id="V01146">
    <property type="protein sequence ID" value="CAA24390.1"/>
    <property type="molecule type" value="Genomic_DNA"/>
</dbReference>
<dbReference type="EMBL" id="V01127">
    <property type="protein sequence ID" value="CAA24333.1"/>
    <property type="molecule type" value="Genomic_DNA"/>
</dbReference>
<dbReference type="EMBL" id="M38308">
    <property type="protein sequence ID" value="AAA32569.1"/>
    <property type="molecule type" value="Genomic_DNA"/>
</dbReference>
<dbReference type="PIR" id="A94615">
    <property type="entry name" value="RNBP17"/>
</dbReference>
<dbReference type="RefSeq" id="NP_041960.1">
    <property type="nucleotide sequence ID" value="NC_001604.1"/>
</dbReference>
<dbReference type="PDB" id="1ARO">
    <property type="method" value="X-ray"/>
    <property type="resolution" value="2.80 A"/>
    <property type="chains" value="P=1-883"/>
</dbReference>
<dbReference type="PDB" id="1CEZ">
    <property type="method" value="X-ray"/>
    <property type="resolution" value="2.40 A"/>
    <property type="chains" value="A=1-883"/>
</dbReference>
<dbReference type="PDB" id="1H38">
    <property type="method" value="X-ray"/>
    <property type="resolution" value="2.90 A"/>
    <property type="chains" value="A/B/C/D=1-883"/>
</dbReference>
<dbReference type="PDB" id="1MSW">
    <property type="method" value="X-ray"/>
    <property type="resolution" value="2.10 A"/>
    <property type="chains" value="D=1-883"/>
</dbReference>
<dbReference type="PDB" id="1QLN">
    <property type="method" value="X-ray"/>
    <property type="resolution" value="2.40 A"/>
    <property type="chains" value="A=1-883"/>
</dbReference>
<dbReference type="PDB" id="1S0V">
    <property type="method" value="X-ray"/>
    <property type="resolution" value="3.20 A"/>
    <property type="chains" value="A/B/C/D=1-883"/>
</dbReference>
<dbReference type="PDB" id="1S76">
    <property type="method" value="X-ray"/>
    <property type="resolution" value="2.88 A"/>
    <property type="chains" value="D=1-883"/>
</dbReference>
<dbReference type="PDB" id="1S77">
    <property type="method" value="X-ray"/>
    <property type="resolution" value="2.69 A"/>
    <property type="chains" value="D=1-883"/>
</dbReference>
<dbReference type="PDB" id="2PI4">
    <property type="method" value="X-ray"/>
    <property type="resolution" value="2.50 A"/>
    <property type="chains" value="A=6-883"/>
</dbReference>
<dbReference type="PDB" id="2PI5">
    <property type="method" value="X-ray"/>
    <property type="resolution" value="2.90 A"/>
    <property type="chains" value="A=6-883"/>
</dbReference>
<dbReference type="PDB" id="3E2E">
    <property type="method" value="X-ray"/>
    <property type="resolution" value="3.00 A"/>
    <property type="chains" value="A=1-883"/>
</dbReference>
<dbReference type="PDB" id="3E3J">
    <property type="method" value="X-ray"/>
    <property type="resolution" value="6.70 A"/>
    <property type="chains" value="B/C=1-883"/>
</dbReference>
<dbReference type="PDB" id="4RNP">
    <property type="method" value="X-ray"/>
    <property type="resolution" value="3.00 A"/>
    <property type="chains" value="A/B/C=1-883"/>
</dbReference>
<dbReference type="PDB" id="8DH0">
    <property type="method" value="X-ray"/>
    <property type="resolution" value="2.90 A"/>
    <property type="chains" value="B/F/J/N=1-883"/>
</dbReference>
<dbReference type="PDB" id="8DH1">
    <property type="method" value="X-ray"/>
    <property type="resolution" value="2.65 A"/>
    <property type="chains" value="B/E/I/L=1-883"/>
</dbReference>
<dbReference type="PDB" id="8DH2">
    <property type="method" value="X-ray"/>
    <property type="resolution" value="2.90 A"/>
    <property type="chains" value="B/E/I/L=1-883"/>
</dbReference>
<dbReference type="PDB" id="8DH3">
    <property type="method" value="X-ray"/>
    <property type="resolution" value="3.00 A"/>
    <property type="chains" value="B/E/I/M=1-883"/>
</dbReference>
<dbReference type="PDB" id="8DH4">
    <property type="method" value="X-ray"/>
    <property type="resolution" value="2.80 A"/>
    <property type="chains" value="B/E/I/M=1-883"/>
</dbReference>
<dbReference type="PDB" id="8DH5">
    <property type="method" value="X-ray"/>
    <property type="resolution" value="2.85 A"/>
    <property type="chains" value="B/E/I/M=1-883"/>
</dbReference>
<dbReference type="PDBsum" id="1ARO"/>
<dbReference type="PDBsum" id="1CEZ"/>
<dbReference type="PDBsum" id="1H38"/>
<dbReference type="PDBsum" id="1MSW"/>
<dbReference type="PDBsum" id="1QLN"/>
<dbReference type="PDBsum" id="1S0V"/>
<dbReference type="PDBsum" id="1S76"/>
<dbReference type="PDBsum" id="1S77"/>
<dbReference type="PDBsum" id="2PI4"/>
<dbReference type="PDBsum" id="2PI5"/>
<dbReference type="PDBsum" id="3E2E"/>
<dbReference type="PDBsum" id="3E3J"/>
<dbReference type="PDBsum" id="4RNP"/>
<dbReference type="PDBsum" id="8DH0"/>
<dbReference type="PDBsum" id="8DH1"/>
<dbReference type="PDBsum" id="8DH2"/>
<dbReference type="PDBsum" id="8DH3"/>
<dbReference type="PDBsum" id="8DH4"/>
<dbReference type="PDBsum" id="8DH5"/>
<dbReference type="SMR" id="P00573"/>
<dbReference type="DIP" id="DIP-6091N"/>
<dbReference type="IntAct" id="P00573">
    <property type="interactions" value="1"/>
</dbReference>
<dbReference type="MINT" id="P00573"/>
<dbReference type="BindingDB" id="P00573"/>
<dbReference type="ChEMBL" id="CHEMBL1075072"/>
<dbReference type="KEGG" id="vg:1261050"/>
<dbReference type="OrthoDB" id="309at10239"/>
<dbReference type="BRENDA" id="2.7.7.6">
    <property type="organism ID" value="736"/>
</dbReference>
<dbReference type="EvolutionaryTrace" id="P00573"/>
<dbReference type="PRO" id="PR:P00573"/>
<dbReference type="Proteomes" id="UP000000840">
    <property type="component" value="Genome"/>
</dbReference>
<dbReference type="GO" id="GO:0000428">
    <property type="term" value="C:DNA-directed RNA polymerase complex"/>
    <property type="evidence" value="ECO:0007669"/>
    <property type="project" value="UniProtKB-KW"/>
</dbReference>
<dbReference type="GO" id="GO:0003677">
    <property type="term" value="F:DNA binding"/>
    <property type="evidence" value="ECO:0007669"/>
    <property type="project" value="InterPro"/>
</dbReference>
<dbReference type="GO" id="GO:0003899">
    <property type="term" value="F:DNA-directed RNA polymerase activity"/>
    <property type="evidence" value="ECO:0007669"/>
    <property type="project" value="UniProtKB-EC"/>
</dbReference>
<dbReference type="GO" id="GO:0006351">
    <property type="term" value="P:DNA-templated transcription"/>
    <property type="evidence" value="ECO:0007669"/>
    <property type="project" value="InterPro"/>
</dbReference>
<dbReference type="GO" id="GO:0039695">
    <property type="term" value="P:DNA-templated viral transcription"/>
    <property type="evidence" value="ECO:0000314"/>
    <property type="project" value="UniProtKB"/>
</dbReference>
<dbReference type="FunFam" id="1.10.1320.10:FF:000003">
    <property type="entry name" value="DNA-directed RNA polymerase"/>
    <property type="match status" value="1"/>
</dbReference>
<dbReference type="FunFam" id="1.10.150.20:FF:000065">
    <property type="entry name" value="DNA-directed RNA polymerase"/>
    <property type="match status" value="1"/>
</dbReference>
<dbReference type="FunFam" id="1.10.287.260:FF:000001">
    <property type="entry name" value="DNA-directed RNA polymerase"/>
    <property type="match status" value="1"/>
</dbReference>
<dbReference type="FunFam" id="1.10.287.280:FF:000002">
    <property type="entry name" value="DNA-directed RNA polymerase"/>
    <property type="match status" value="1"/>
</dbReference>
<dbReference type="Gene3D" id="1.10.287.260">
    <property type="match status" value="1"/>
</dbReference>
<dbReference type="Gene3D" id="1.10.287.280">
    <property type="match status" value="1"/>
</dbReference>
<dbReference type="Gene3D" id="1.10.150.20">
    <property type="entry name" value="5' to 3' exonuclease, C-terminal subdomain"/>
    <property type="match status" value="1"/>
</dbReference>
<dbReference type="Gene3D" id="1.10.1320.10">
    <property type="entry name" value="DNA-directed RNA polymerase, N-terminal domain"/>
    <property type="match status" value="1"/>
</dbReference>
<dbReference type="InterPro" id="IPR024075">
    <property type="entry name" value="DNA-dir_RNA_pol_helix_hairp_sf"/>
</dbReference>
<dbReference type="InterPro" id="IPR046950">
    <property type="entry name" value="DNA-dir_Rpol_C_phage-type"/>
</dbReference>
<dbReference type="InterPro" id="IPR002092">
    <property type="entry name" value="DNA-dir_Rpol_phage-type"/>
</dbReference>
<dbReference type="InterPro" id="IPR043502">
    <property type="entry name" value="DNA/RNA_pol_sf"/>
</dbReference>
<dbReference type="InterPro" id="IPR037159">
    <property type="entry name" value="RNA_POL_N_sf"/>
</dbReference>
<dbReference type="InterPro" id="IPR029262">
    <property type="entry name" value="RPOL_N"/>
</dbReference>
<dbReference type="PANTHER" id="PTHR10102">
    <property type="entry name" value="DNA-DIRECTED RNA POLYMERASE, MITOCHONDRIAL"/>
    <property type="match status" value="1"/>
</dbReference>
<dbReference type="PANTHER" id="PTHR10102:SF0">
    <property type="entry name" value="DNA-DIRECTED RNA POLYMERASE, MITOCHONDRIAL"/>
    <property type="match status" value="1"/>
</dbReference>
<dbReference type="Pfam" id="PF00940">
    <property type="entry name" value="RNA_pol"/>
    <property type="match status" value="1"/>
</dbReference>
<dbReference type="Pfam" id="PF14700">
    <property type="entry name" value="RPOL_N"/>
    <property type="match status" value="1"/>
</dbReference>
<dbReference type="SMART" id="SM01311">
    <property type="entry name" value="RPOL_N"/>
    <property type="match status" value="1"/>
</dbReference>
<dbReference type="SUPFAM" id="SSF56672">
    <property type="entry name" value="DNA/RNA polymerases"/>
    <property type="match status" value="1"/>
</dbReference>
<dbReference type="PROSITE" id="PS00900">
    <property type="entry name" value="RNA_POL_PHAGE_1"/>
    <property type="match status" value="1"/>
</dbReference>
<dbReference type="PROSITE" id="PS00489">
    <property type="entry name" value="RNA_POL_PHAGE_2"/>
    <property type="match status" value="1"/>
</dbReference>
<organismHost>
    <name type="scientific">Escherichia coli</name>
    <dbReference type="NCBI Taxonomy" id="562"/>
</organismHost>
<organism>
    <name type="scientific">Escherichia phage T7</name>
    <name type="common">Bacteriophage T7</name>
    <dbReference type="NCBI Taxonomy" id="10760"/>
    <lineage>
        <taxon>Viruses</taxon>
        <taxon>Duplodnaviria</taxon>
        <taxon>Heunggongvirae</taxon>
        <taxon>Uroviricota</taxon>
        <taxon>Caudoviricetes</taxon>
        <taxon>Autographiviridae</taxon>
        <taxon>Studiervirinae</taxon>
        <taxon>Teseptimavirus</taxon>
        <taxon>Teseptimavirus T7</taxon>
    </lineage>
</organism>
<keyword id="KW-0002">3D-structure</keyword>
<keyword id="KW-0240">DNA-directed RNA polymerase</keyword>
<keyword id="KW-0548">Nucleotidyltransferase</keyword>
<keyword id="KW-1185">Reference proteome</keyword>
<keyword id="KW-0804">Transcription</keyword>
<keyword id="KW-0808">Transferase</keyword>
<keyword id="KW-1195">Viral transcription</keyword>
<comment type="function">
    <text evidence="4 7 8 9 11">Highly processive DNA-dependent RNA polymerase that catalyzes the transcription of class II and class III viral genes. Recognizes a specific promoter sequence and enters first into an 'abortive phase' where very short transcripts are synthesized and released before proceeding to the processive transcription of long RNA chains. Unwinds the double-stranded DNA to expose the coding strand for templating. Participates in the initiation of viral DNA replication presumably by making primers accessible to the DNA polymerase, thus facilitating the DNA opening. Also plays a role in viral DNA packaging, probably by pausing the transcription at the right end of concatemer junction to allow packaging complex recruitment and beginning of the packaging process.</text>
</comment>
<comment type="catalytic activity">
    <reaction evidence="1 2 10">
        <text>RNA(n) + a ribonucleoside 5'-triphosphate = RNA(n+1) + diphosphate</text>
        <dbReference type="Rhea" id="RHEA:21248"/>
        <dbReference type="Rhea" id="RHEA-COMP:14527"/>
        <dbReference type="Rhea" id="RHEA-COMP:17342"/>
        <dbReference type="ChEBI" id="CHEBI:33019"/>
        <dbReference type="ChEBI" id="CHEBI:61557"/>
        <dbReference type="ChEBI" id="CHEBI:140395"/>
        <dbReference type="EC" id="2.7.7.6"/>
    </reaction>
</comment>
<comment type="activity regulation">
    <text evidence="6">Inhibited by the product of prokaryotic viperins (as well as the human ortholog RSAD2), which make various 3'-deoxy-3',4'-didehydro-NTPs, suggesting these modifed nucleotides act as specific chain terminators for this RNA polymerase.</text>
</comment>
<comment type="subunit">
    <text>Monomer. Interacts with T7 lysozyme; this interaction inhibits transcriptional function of T7 RNA polymerase.</text>
</comment>
<comment type="similarity">
    <text evidence="12">Belongs to the phage and mitochondrial RNA polymerase family.</text>
</comment>
<sequence length="883" mass="98855">MNTINIAKNDFSDIELAAIPFNTLADHYGERLAREQLALEHESYEMGEARFRKMFERQLKAGEVADNAAAKPLITTLLPKMIARINDWFEEVKAKRGKRPTAFQFLQEIKPEAVAYITIKTTLACLTSADNTTVQAVASAIGRAIEDEARFGRIRDLEAKHFKKNVEEQLNKRVGHVYKKAFMQVVEADMLSKGLLGGEAWSSWHKEDSIHVGVRCIEMLIESTGMVSLHRQNAGVVGQDSETIELAPEYAEAIATRAGALAGISPMFQPCVVPPKPWTGITGGGYWANGRRPLALVRTHSKKALMRYEDVYMPEVYKAINIAQNTAWKINKKVLAVANVITKWKHCPVEDIPAIEREELPMKPEDIDMNPEALTAWKRAAAAVYRKDKARKSRRISLEFMLEQANKFANHKAIWFPYNMDWRGRVYAVSMFNPQGNDMTKGLLTLAKGKPIGKEGYYWLKIHGANCAGVDKVPFPERIKFIEENHENIMACAKSPLENTWWAEQDSPFCFLAFCFEYAGVQHHGLSYNCSLPLAFDGSCSGIQHFSAMLRDEVGGRAVNLLPSETVQDIYGIVAKKVNEILQADAINGTDNEVVTVTDENTGEISEKVKLGTKALAGQWLAYGVTRSVTKRSVMTLAYGSKEFGFRQQVLEDTIQPAIDSGKGLMFTQPNQAAGYMAKLIWESVSVTVVAAVEAMNWLKSAAKLLAAEVKDKKTGEILRKRCAVHWVTPDGFPVWQEYKKPIQTRLNLMFLGQFRLQPTINTNKDSEIDAHKQESGIAPNFVHSQDGSHLRKTVVWAHEKYGIESFALIHDSFGTIPADAANLFKAVRETMVDTYESCDVLADFYDQFADQLHESQLDKMPALPAKGNLNLRDILESDFAFA</sequence>
<protein>
    <recommendedName>
        <fullName>T7 RNA polymerase</fullName>
    </recommendedName>
    <alternativeName>
        <fullName>DNA-directed RNA polymerase</fullName>
        <ecNumber evidence="10">2.7.7.6</ecNumber>
    </alternativeName>
</protein>
<reference key="1">
    <citation type="journal article" date="1983" name="J. Mol. Biol.">
        <title>Complete nucleotide sequence of bacteriophage T7 DNA and the locations of T7 genetic elements.</title>
        <authorList>
            <person name="Dunn J.J."/>
            <person name="Studier F.W."/>
        </authorList>
    </citation>
    <scope>NUCLEOTIDE SEQUENCE [LARGE SCALE GENOMIC DNA]</scope>
</reference>
<reference key="2">
    <citation type="journal article" date="1984" name="J. Mol. Biol.">
        <title>Nucleotide sequence of the gene for bacteriophage T7 RNA polymerase.</title>
        <authorList>
            <person name="Moffatt B.A."/>
            <person name="Dunn J.J."/>
            <person name="Studier F.W."/>
        </authorList>
    </citation>
    <scope>SEQUENCE REVISION</scope>
</reference>
<reference key="3">
    <citation type="journal article" date="1981" name="J. Mol. Biol.">
        <title>Nucleotide sequence of the cloned gene for bacteriophage T7 RNA polymerase.</title>
        <authorList>
            <person name="Stahl S.J."/>
            <person name="Zinn K."/>
        </authorList>
    </citation>
    <scope>NUCLEOTIDE SEQUENCE [GENOMIC DNA]</scope>
</reference>
<reference key="4">
    <citation type="journal article" date="1984" name="Bioorg. Khim.">
        <title>Phage T7 RNA-polymerase: gene cloning and its structure.</title>
        <authorList>
            <person name="Grachev M.A."/>
            <person name="Pletnev A.G."/>
        </authorList>
    </citation>
    <scope>NUCLEOTIDE SEQUENCE [GENOMIC DNA]</scope>
</reference>
<reference key="5">
    <citation type="journal article" date="1981" name="J. Mol. Biol.">
        <title>Nucleotide sequence from the genetic left end of bacteriophage T7 DNA to the beginning of gene 4.</title>
        <authorList>
            <person name="Dunn J.J."/>
            <person name="Studier F.W."/>
        </authorList>
    </citation>
    <scope>NUCLEOTIDE SEQUENCE [GENOMIC DNA] OF 1-59 AND 829-883</scope>
</reference>
<reference key="6">
    <citation type="journal article" date="1980" name="J. Virol.">
        <title>Evidence for direct involvement of T7 RNA polymerase bacteriophage DNA replication.</title>
        <authorList>
            <person name="Hinkle D.C."/>
        </authorList>
    </citation>
    <scope>FUNCTION IN DNA REPLICATION</scope>
</reference>
<reference key="7">
    <citation type="journal article" date="1981" name="Proc. Natl. Acad. Sci. U.S.A.">
        <title>Initiation of DNA replication at the primary origin of bacteriophage T7 by purified proteins: requirement for T7 RNA polymerase.</title>
        <authorList>
            <person name="Romano L.J."/>
            <person name="Tamanoi F."/>
            <person name="Richardson C.C."/>
        </authorList>
    </citation>
    <scope>FUNCTION IN DNA REPLICATION</scope>
</reference>
<reference key="8">
    <citation type="journal article" date="1988" name="Biochemistry">
        <title>Processivity in early stages of transcription by T7 RNA polymerase.</title>
        <authorList>
            <person name="Martin C.T."/>
            <person name="Muller D.K."/>
            <person name="Coleman J.E."/>
        </authorList>
    </citation>
    <scope>FUNCTION</scope>
</reference>
<reference key="9">
    <citation type="journal article" date="1991" name="Eur. J. Biochem.">
        <title>Lys631 residue in the active site of the bacteriophage T7 RNA polymerase. Affinity labeling and site-directed mutagenesis.</title>
        <authorList>
            <person name="Maksimova T.G."/>
            <person name="Mustayev A.A."/>
            <person name="Zaychikov E.F."/>
            <person name="Lyakhov D.L."/>
            <person name="Tunitskaya V.L."/>
            <person name="Akbarov A.K."/>
            <person name="Luchin S.V."/>
            <person name="Rechinsky V.O."/>
            <person name="Chernov B.K."/>
            <person name="Kochetkov S.N."/>
        </authorList>
    </citation>
    <scope>ACTIVE SITE LYS-631</scope>
    <scope>MUTAGENESIS OF LYS-631</scope>
</reference>
<reference key="10">
    <citation type="journal article" date="1992" name="Mol. Biol. (Mosk.)">
        <title>Site-specific mutagenesis of residue Lys-172 of phage T7 RNA polymerase: characterization of transcription properties of mutant proteins.</title>
        <authorList>
            <person name="Lyakhov D.L."/>
            <person name="Ilgenfrits H."/>
            <person name="Chernov B.K."/>
            <person name="Dragan S.M."/>
            <person name="Rechinsky V.O."/>
            <person name="Pokholok D.K."/>
            <person name="Tunitskaya V.L."/>
            <person name="Kochetkov S.N."/>
        </authorList>
    </citation>
    <scope>MUTAGENESIS OF LYS-172</scope>
</reference>
<reference key="11">
    <citation type="journal article" date="1993" name="Mol. Gen. Genet.">
        <title>Random mutagenesis of the gene for bacteriophage T7 RNA polymerase.</title>
        <authorList>
            <person name="Rechinsky V.O."/>
            <person name="Kostyuk D.A."/>
            <person name="Lyakhov D.L."/>
            <person name="Chernov B.K."/>
            <person name="Kochetkov S.N."/>
        </authorList>
    </citation>
    <scope>ACTIVE SITE ASP-537; LYS-631; ASP-812</scope>
    <scope>MUTAGENESIS</scope>
</reference>
<reference key="12">
    <citation type="journal article" date="1993" name="FEBS Lett.">
        <title>Tyr-571 is involved in the T7 RNA polymerase binding to its promoter.</title>
        <authorList>
            <person name="Rechinsky V.O."/>
            <person name="Tunitskaya V.L."/>
            <person name="Dragan S.M."/>
            <person name="Kostyuk D.A."/>
            <person name="Kochetkov S.N."/>
        </authorList>
    </citation>
    <scope>MUTAGENESIS</scope>
</reference>
<reference key="13">
    <citation type="journal article" date="1994" name="J. Mol. Biol.">
        <title>Bacteriophage T7 RNA polymerase and its active-site mutants. Kinetic, spectroscopic and calorimetric characterization.</title>
        <authorList>
            <person name="Osumi-Davis P."/>
            <person name="Sreerama N."/>
            <person name="Volkin D.B."/>
            <person name="Middaugh C.R."/>
            <person name="Woody R.W."/>
            <person name="Woody A.-Y.M."/>
        </authorList>
    </citation>
    <scope>MUTAGENESIS</scope>
</reference>
<reference key="14">
    <citation type="journal article" date="1997" name="J. Mol. Biol.">
        <title>Mechanism of inhibition of bacteriophage T7 RNA polymerase by T7 lysozyme.</title>
        <authorList>
            <person name="Zhang X."/>
            <person name="Studier F.W."/>
        </authorList>
    </citation>
    <scope>FUNCTION</scope>
</reference>
<reference key="15">
    <citation type="journal article" date="2004" name="J. Mol. Biol.">
        <title>Multiple roles of T7 RNA polymerase and T7 lysozyme during bacteriophage T7 infection.</title>
        <authorList>
            <person name="Zhang X."/>
            <person name="Studier F.W."/>
        </authorList>
    </citation>
    <scope>FUNCTION</scope>
</reference>
<reference key="16">
    <citation type="journal article" date="2021" name="Nature">
        <title>Prokaryotic viperins produce diverse antiviral molecules.</title>
        <authorList>
            <person name="Bernheim A."/>
            <person name="Millman A."/>
            <person name="Ofir G."/>
            <person name="Meitav G."/>
            <person name="Avraham C."/>
            <person name="Shomar H."/>
            <person name="Rosenberg M.M."/>
            <person name="Tal N."/>
            <person name="Melamed S."/>
            <person name="Amitai G."/>
            <person name="Sorek R."/>
        </authorList>
    </citation>
    <scope>ACTIVITY REGULATION</scope>
</reference>
<reference key="17">
    <citation type="journal article" date="1993" name="Nature">
        <title>Crystal structure of bacteriophage T7 RNA polymerase at 3.3-A resolution.</title>
        <authorList>
            <person name="Sousa R."/>
            <person name="Chung Y.J."/>
            <person name="Rose J.P."/>
            <person name="Wang B.-C."/>
        </authorList>
    </citation>
    <scope>X-RAY CRYSTALLOGRAPHY (3.3 ANGSTROMS)</scope>
</reference>
<reference key="18">
    <citation type="journal article" date="1998" name="EMBO J.">
        <title>Structure of T7 RNA polymerase complexed to the transcriptional inhibitor T7 lysozyme.</title>
        <authorList>
            <person name="Jeruzalmi D."/>
            <person name="Steitz T.A."/>
        </authorList>
    </citation>
    <scope>X-RAY CRYSTALLOGRAPHY (2.8 ANGSTROMS) OF COMPLEX WITH LYSOZYME</scope>
</reference>
<feature type="chain" id="PRO_0000087749" description="T7 RNA polymerase">
    <location>
        <begin position="1"/>
        <end position="883"/>
    </location>
</feature>
<feature type="active site" evidence="10">
    <location>
        <position position="537"/>
    </location>
</feature>
<feature type="active site" evidence="5 10">
    <location>
        <position position="631"/>
    </location>
</feature>
<feature type="active site" evidence="10">
    <location>
        <position position="812"/>
    </location>
</feature>
<feature type="mutagenesis site" description="No change in activity." evidence="3">
    <original>K</original>
    <variation>L</variation>
    <variation>G</variation>
    <location>
        <position position="172"/>
    </location>
</feature>
<feature type="mutagenesis site" description="Inactivated.">
    <original>P</original>
    <variation>A</variation>
    <variation>T</variation>
    <location>
        <position position="563"/>
    </location>
</feature>
<feature type="mutagenesis site" description="Inactivated.">
    <original>Y</original>
    <variation>S</variation>
    <location>
        <position position="571"/>
    </location>
</feature>
<feature type="mutagenesis site" description="Partially inactivated." evidence="5">
    <original>K</original>
    <variation>G</variation>
    <location>
        <position position="631"/>
    </location>
</feature>
<feature type="mutagenesis site" description="Partially inactivated." evidence="5">
    <original>K</original>
    <variation>L</variation>
    <location>
        <position position="631"/>
    </location>
</feature>
<feature type="mutagenesis site" description="Partially inactivated." evidence="5">
    <original>K</original>
    <variation>R</variation>
    <location>
        <position position="631"/>
    </location>
</feature>
<feature type="mutagenesis site" description="Inactivated.">
    <original>T</original>
    <variation>P</variation>
    <location>
        <position position="636"/>
    </location>
</feature>
<feature type="mutagenesis site" description="Inactivated.">
    <original>Y</original>
    <variation>D</variation>
    <location>
        <position position="639"/>
    </location>
</feature>
<feature type="mutagenesis site" description="Inactivated.">
    <original>F</original>
    <variation>C</variation>
    <location>
        <position position="646"/>
    </location>
</feature>
<feature type="sequence conflict" description="In Ref. 3; CAA24333." evidence="12" ref="3">
    <original>DKARKSRRISLEFMLEQANKFANHKAIWFPYNMDWRG</original>
    <variation>TRLASLAVSALSSCLSKPISLLTIRPSGSLTTWTGAV</variation>
    <location>
        <begin position="388"/>
        <end position="424"/>
    </location>
</feature>
<feature type="sequence conflict" description="In Ref. 4; AAA32569." evidence="12" ref="4">
    <original>K</original>
    <variation>R</variation>
    <location>
        <position position="389"/>
    </location>
</feature>
<feature type="sequence conflict" description="In Ref. 3; CAA24333." evidence="12" ref="3">
    <original>L</original>
    <variation>R</variation>
    <location>
        <position position="443"/>
    </location>
</feature>
<feature type="sequence conflict" description="In Ref. 3; CAA24333." evidence="12" ref="3">
    <original>P</original>
    <variation>S</variation>
    <location>
        <position position="474"/>
    </location>
</feature>
<feature type="sequence conflict" description="In Ref. 4; AAA32569." evidence="12" ref="4">
    <original>Y</original>
    <variation>H</variation>
    <location>
        <position position="623"/>
    </location>
</feature>
<feature type="sequence conflict" description="In Ref. 4; AAA32569." evidence="12" ref="4">
    <original>L</original>
    <variation>P</variation>
    <location>
        <position position="665"/>
    </location>
</feature>
<feature type="helix" evidence="14">
    <location>
        <begin position="7"/>
        <end position="10"/>
    </location>
</feature>
<feature type="helix" evidence="16">
    <location>
        <begin position="12"/>
        <end position="14"/>
    </location>
</feature>
<feature type="helix" evidence="16">
    <location>
        <begin position="18"/>
        <end position="24"/>
    </location>
</feature>
<feature type="turn" evidence="16">
    <location>
        <begin position="25"/>
        <end position="28"/>
    </location>
</feature>
<feature type="helix" evidence="16">
    <location>
        <begin position="30"/>
        <end position="59"/>
    </location>
</feature>
<feature type="turn" evidence="16">
    <location>
        <begin position="60"/>
        <end position="62"/>
    </location>
</feature>
<feature type="helix" evidence="16">
    <location>
        <begin position="64"/>
        <end position="66"/>
    </location>
</feature>
<feature type="turn" evidence="16">
    <location>
        <begin position="68"/>
        <end position="70"/>
    </location>
</feature>
<feature type="helix" evidence="16">
    <location>
        <begin position="71"/>
        <end position="94"/>
    </location>
</feature>
<feature type="turn" evidence="16">
    <location>
        <begin position="101"/>
        <end position="107"/>
    </location>
</feature>
<feature type="helix" evidence="16">
    <location>
        <begin position="111"/>
        <end position="128"/>
    </location>
</feature>
<feature type="strand" evidence="22">
    <location>
        <begin position="129"/>
        <end position="131"/>
    </location>
</feature>
<feature type="helix" evidence="16">
    <location>
        <begin position="134"/>
        <end position="156"/>
    </location>
</feature>
<feature type="turn" evidence="27">
    <location>
        <begin position="157"/>
        <end position="159"/>
    </location>
</feature>
<feature type="helix" evidence="16">
    <location>
        <begin position="162"/>
        <end position="165"/>
    </location>
</feature>
<feature type="helix" evidence="16">
    <location>
        <begin position="168"/>
        <end position="172"/>
    </location>
</feature>
<feature type="helix" evidence="16">
    <location>
        <begin position="176"/>
        <end position="189"/>
    </location>
</feature>
<feature type="turn" evidence="16">
    <location>
        <begin position="191"/>
        <end position="198"/>
    </location>
</feature>
<feature type="turn" evidence="19">
    <location>
        <begin position="205"/>
        <end position="207"/>
    </location>
</feature>
<feature type="helix" evidence="16">
    <location>
        <begin position="208"/>
        <end position="223"/>
    </location>
</feature>
<feature type="strand" evidence="25">
    <location>
        <begin position="224"/>
        <end position="226"/>
    </location>
</feature>
<feature type="strand" evidence="16">
    <location>
        <begin position="227"/>
        <end position="230"/>
    </location>
</feature>
<feature type="strand" evidence="15">
    <location>
        <begin position="231"/>
        <end position="233"/>
    </location>
</feature>
<feature type="turn" evidence="14">
    <location>
        <begin position="237"/>
        <end position="239"/>
    </location>
</feature>
<feature type="strand" evidence="16">
    <location>
        <begin position="243"/>
        <end position="246"/>
    </location>
</feature>
<feature type="helix" evidence="16">
    <location>
        <begin position="248"/>
        <end position="261"/>
    </location>
</feature>
<feature type="strand" evidence="16">
    <location>
        <begin position="271"/>
        <end position="273"/>
    </location>
</feature>
<feature type="strand" evidence="16">
    <location>
        <begin position="279"/>
        <end position="283"/>
    </location>
</feature>
<feature type="strand" evidence="16">
    <location>
        <begin position="285"/>
        <end position="288"/>
    </location>
</feature>
<feature type="strand" evidence="14">
    <location>
        <begin position="289"/>
        <end position="291"/>
    </location>
</feature>
<feature type="strand" evidence="16">
    <location>
        <begin position="295"/>
        <end position="298"/>
    </location>
</feature>
<feature type="helix" evidence="16">
    <location>
        <begin position="304"/>
        <end position="307"/>
    </location>
</feature>
<feature type="turn" evidence="16">
    <location>
        <begin position="308"/>
        <end position="310"/>
    </location>
</feature>
<feature type="helix" evidence="16">
    <location>
        <begin position="314"/>
        <end position="324"/>
    </location>
</feature>
<feature type="strand" evidence="16">
    <location>
        <begin position="328"/>
        <end position="330"/>
    </location>
</feature>
<feature type="helix" evidence="16">
    <location>
        <begin position="332"/>
        <end position="341"/>
    </location>
</feature>
<feature type="strand" evidence="14">
    <location>
        <begin position="344"/>
        <end position="346"/>
    </location>
</feature>
<feature type="turn" evidence="26">
    <location>
        <begin position="348"/>
        <end position="350"/>
    </location>
</feature>
<feature type="strand" evidence="20">
    <location>
        <begin position="365"/>
        <end position="368"/>
    </location>
</feature>
<feature type="turn" evidence="17">
    <location>
        <begin position="370"/>
        <end position="372"/>
    </location>
</feature>
<feature type="helix" evidence="20">
    <location>
        <begin position="374"/>
        <end position="377"/>
    </location>
</feature>
<feature type="helix" evidence="16">
    <location>
        <begin position="379"/>
        <end position="402"/>
    </location>
</feature>
<feature type="turn" evidence="16">
    <location>
        <begin position="403"/>
        <end position="405"/>
    </location>
</feature>
<feature type="strand" evidence="16">
    <location>
        <begin position="406"/>
        <end position="410"/>
    </location>
</feature>
<feature type="strand" evidence="16">
    <location>
        <begin position="418"/>
        <end position="421"/>
    </location>
</feature>
<feature type="strand" evidence="13">
    <location>
        <begin position="422"/>
        <end position="424"/>
    </location>
</feature>
<feature type="strand" evidence="16">
    <location>
        <begin position="426"/>
        <end position="432"/>
    </location>
</feature>
<feature type="strand" evidence="20">
    <location>
        <begin position="434"/>
        <end position="436"/>
    </location>
</feature>
<feature type="helix" evidence="16">
    <location>
        <begin position="438"/>
        <end position="443"/>
    </location>
</feature>
<feature type="strand" evidence="16">
    <location>
        <begin position="444"/>
        <end position="448"/>
    </location>
</feature>
<feature type="helix" evidence="16">
    <location>
        <begin position="453"/>
        <end position="467"/>
    </location>
</feature>
<feature type="helix" evidence="16">
    <location>
        <begin position="475"/>
        <end position="484"/>
    </location>
</feature>
<feature type="helix" evidence="16">
    <location>
        <begin position="486"/>
        <end position="494"/>
    </location>
</feature>
<feature type="helix" evidence="16">
    <location>
        <begin position="496"/>
        <end position="499"/>
    </location>
</feature>
<feature type="helix" evidence="16">
    <location>
        <begin position="501"/>
        <end position="504"/>
    </location>
</feature>
<feature type="strand" evidence="16">
    <location>
        <begin position="505"/>
        <end position="507"/>
    </location>
</feature>
<feature type="helix" evidence="16">
    <location>
        <begin position="508"/>
        <end position="524"/>
    </location>
</feature>
<feature type="helix" evidence="14">
    <location>
        <begin position="525"/>
        <end position="527"/>
    </location>
</feature>
<feature type="strand" evidence="13">
    <location>
        <begin position="528"/>
        <end position="530"/>
    </location>
</feature>
<feature type="strand" evidence="16">
    <location>
        <begin position="534"/>
        <end position="537"/>
    </location>
</feature>
<feature type="helix" evidence="16">
    <location>
        <begin position="541"/>
        <end position="550"/>
    </location>
</feature>
<feature type="helix" evidence="16">
    <location>
        <begin position="555"/>
        <end position="558"/>
    </location>
</feature>
<feature type="strand" evidence="13">
    <location>
        <begin position="559"/>
        <end position="564"/>
    </location>
</feature>
<feature type="helix" evidence="16">
    <location>
        <begin position="570"/>
        <end position="586"/>
    </location>
</feature>
<feature type="strand" evidence="23">
    <location>
        <begin position="593"/>
        <end position="595"/>
    </location>
</feature>
<feature type="strand" evidence="16">
    <location>
        <begin position="597"/>
        <end position="602"/>
    </location>
</feature>
<feature type="strand" evidence="24">
    <location>
        <begin position="605"/>
        <end position="610"/>
    </location>
</feature>
<feature type="helix" evidence="16">
    <location>
        <begin position="613"/>
        <end position="621"/>
    </location>
</feature>
<feature type="helix" evidence="16">
    <location>
        <begin position="627"/>
        <end position="635"/>
    </location>
</feature>
<feature type="helix" evidence="16">
    <location>
        <begin position="636"/>
        <end position="639"/>
    </location>
</feature>
<feature type="helix" evidence="16">
    <location>
        <begin position="643"/>
        <end position="653"/>
    </location>
</feature>
<feature type="helix" evidence="16">
    <location>
        <begin position="655"/>
        <end position="660"/>
    </location>
</feature>
<feature type="turn" evidence="19">
    <location>
        <begin position="662"/>
        <end position="666"/>
    </location>
</feature>
<feature type="helix" evidence="16">
    <location>
        <begin position="670"/>
        <end position="688"/>
    </location>
</feature>
<feature type="helix" evidence="16">
    <location>
        <begin position="690"/>
        <end position="707"/>
    </location>
</feature>
<feature type="turn" evidence="16">
    <location>
        <begin position="713"/>
        <end position="715"/>
    </location>
</feature>
<feature type="strand" evidence="16">
    <location>
        <begin position="718"/>
        <end position="720"/>
    </location>
</feature>
<feature type="strand" evidence="16">
    <location>
        <begin position="725"/>
        <end position="728"/>
    </location>
</feature>
<feature type="turn" evidence="21">
    <location>
        <begin position="730"/>
        <end position="732"/>
    </location>
</feature>
<feature type="strand" evidence="16">
    <location>
        <begin position="734"/>
        <end position="737"/>
    </location>
</feature>
<feature type="strand" evidence="14">
    <location>
        <begin position="740"/>
        <end position="746"/>
    </location>
</feature>
<feature type="strand" evidence="19">
    <location>
        <begin position="747"/>
        <end position="749"/>
    </location>
</feature>
<feature type="strand" evidence="16">
    <location>
        <begin position="750"/>
        <end position="752"/>
    </location>
</feature>
<feature type="strand" evidence="14">
    <location>
        <begin position="755"/>
        <end position="757"/>
    </location>
</feature>
<feature type="strand" evidence="14">
    <location>
        <begin position="760"/>
        <end position="769"/>
    </location>
</feature>
<feature type="helix" evidence="16">
    <location>
        <begin position="771"/>
        <end position="801"/>
    </location>
</feature>
<feature type="strand" evidence="24">
    <location>
        <begin position="808"/>
        <end position="810"/>
    </location>
</feature>
<feature type="strand" evidence="16">
    <location>
        <begin position="811"/>
        <end position="816"/>
    </location>
</feature>
<feature type="helix" evidence="16">
    <location>
        <begin position="818"/>
        <end position="820"/>
    </location>
</feature>
<feature type="helix" evidence="16">
    <location>
        <begin position="821"/>
        <end position="838"/>
    </location>
</feature>
<feature type="helix" evidence="16">
    <location>
        <begin position="841"/>
        <end position="849"/>
    </location>
</feature>
<feature type="turn" evidence="16">
    <location>
        <begin position="852"/>
        <end position="854"/>
    </location>
</feature>
<feature type="turn" evidence="24">
    <location>
        <begin position="855"/>
        <end position="857"/>
    </location>
</feature>
<feature type="strand" evidence="15">
    <location>
        <begin position="858"/>
        <end position="861"/>
    </location>
</feature>
<feature type="helix" evidence="16">
    <location>
        <begin position="872"/>
        <end position="876"/>
    </location>
</feature>
<feature type="turn" evidence="18">
    <location>
        <begin position="879"/>
        <end position="881"/>
    </location>
</feature>
<proteinExistence type="evidence at protein level"/>
<evidence type="ECO:0000255" key="1">
    <source>
        <dbReference type="PROSITE-ProRule" id="PRU10031"/>
    </source>
</evidence>
<evidence type="ECO:0000255" key="2">
    <source>
        <dbReference type="PROSITE-ProRule" id="PRU10032"/>
    </source>
</evidence>
<evidence type="ECO:0000269" key="3">
    <source>
    </source>
</evidence>
<evidence type="ECO:0000269" key="4">
    <source>
    </source>
</evidence>
<evidence type="ECO:0000269" key="5">
    <source>
    </source>
</evidence>
<evidence type="ECO:0000269" key="6">
    <source>
    </source>
</evidence>
<evidence type="ECO:0000269" key="7">
    <source>
    </source>
</evidence>
<evidence type="ECO:0000269" key="8">
    <source>
    </source>
</evidence>
<evidence type="ECO:0000269" key="9">
    <source>
    </source>
</evidence>
<evidence type="ECO:0000269" key="10">
    <source>
    </source>
</evidence>
<evidence type="ECO:0000269" key="11">
    <source>
    </source>
</evidence>
<evidence type="ECO:0000305" key="12"/>
<evidence type="ECO:0007829" key="13">
    <source>
        <dbReference type="PDB" id="1ARO"/>
    </source>
</evidence>
<evidence type="ECO:0007829" key="14">
    <source>
        <dbReference type="PDB" id="1CEZ"/>
    </source>
</evidence>
<evidence type="ECO:0007829" key="15">
    <source>
        <dbReference type="PDB" id="1H38"/>
    </source>
</evidence>
<evidence type="ECO:0007829" key="16">
    <source>
        <dbReference type="PDB" id="1MSW"/>
    </source>
</evidence>
<evidence type="ECO:0007829" key="17">
    <source>
        <dbReference type="PDB" id="1QLN"/>
    </source>
</evidence>
<evidence type="ECO:0007829" key="18">
    <source>
        <dbReference type="PDB" id="1S76"/>
    </source>
</evidence>
<evidence type="ECO:0007829" key="19">
    <source>
        <dbReference type="PDB" id="1S77"/>
    </source>
</evidence>
<evidence type="ECO:0007829" key="20">
    <source>
        <dbReference type="PDB" id="2PI4"/>
    </source>
</evidence>
<evidence type="ECO:0007829" key="21">
    <source>
        <dbReference type="PDB" id="2PI5"/>
    </source>
</evidence>
<evidence type="ECO:0007829" key="22">
    <source>
        <dbReference type="PDB" id="3E2E"/>
    </source>
</evidence>
<evidence type="ECO:0007829" key="23">
    <source>
        <dbReference type="PDB" id="8DH0"/>
    </source>
</evidence>
<evidence type="ECO:0007829" key="24">
    <source>
        <dbReference type="PDB" id="8DH1"/>
    </source>
</evidence>
<evidence type="ECO:0007829" key="25">
    <source>
        <dbReference type="PDB" id="8DH2"/>
    </source>
</evidence>
<evidence type="ECO:0007829" key="26">
    <source>
        <dbReference type="PDB" id="8DH4"/>
    </source>
</evidence>
<evidence type="ECO:0007829" key="27">
    <source>
        <dbReference type="PDB" id="8DH5"/>
    </source>
</evidence>
<name>RPOL_BPT7</name>